<proteinExistence type="predicted"/>
<organism>
    <name type="scientific">Dictyostelium discoideum</name>
    <name type="common">Social amoeba</name>
    <dbReference type="NCBI Taxonomy" id="44689"/>
    <lineage>
        <taxon>Eukaryota</taxon>
        <taxon>Amoebozoa</taxon>
        <taxon>Evosea</taxon>
        <taxon>Eumycetozoa</taxon>
        <taxon>Dictyostelia</taxon>
        <taxon>Dictyosteliales</taxon>
        <taxon>Dictyosteliaceae</taxon>
        <taxon>Dictyostelium</taxon>
    </lineage>
</organism>
<reference key="1">
    <citation type="journal article" date="2005" name="Nature">
        <title>The genome of the social amoeba Dictyostelium discoideum.</title>
        <authorList>
            <person name="Eichinger L."/>
            <person name="Pachebat J.A."/>
            <person name="Gloeckner G."/>
            <person name="Rajandream M.A."/>
            <person name="Sucgang R."/>
            <person name="Berriman M."/>
            <person name="Song J."/>
            <person name="Olsen R."/>
            <person name="Szafranski K."/>
            <person name="Xu Q."/>
            <person name="Tunggal B."/>
            <person name="Kummerfeld S."/>
            <person name="Madera M."/>
            <person name="Konfortov B.A."/>
            <person name="Rivero F."/>
            <person name="Bankier A.T."/>
            <person name="Lehmann R."/>
            <person name="Hamlin N."/>
            <person name="Davies R."/>
            <person name="Gaudet P."/>
            <person name="Fey P."/>
            <person name="Pilcher K."/>
            <person name="Chen G."/>
            <person name="Saunders D."/>
            <person name="Sodergren E.J."/>
            <person name="Davis P."/>
            <person name="Kerhornou A."/>
            <person name="Nie X."/>
            <person name="Hall N."/>
            <person name="Anjard C."/>
            <person name="Hemphill L."/>
            <person name="Bason N."/>
            <person name="Farbrother P."/>
            <person name="Desany B."/>
            <person name="Just E."/>
            <person name="Morio T."/>
            <person name="Rost R."/>
            <person name="Churcher C.M."/>
            <person name="Cooper J."/>
            <person name="Haydock S."/>
            <person name="van Driessche N."/>
            <person name="Cronin A."/>
            <person name="Goodhead I."/>
            <person name="Muzny D.M."/>
            <person name="Mourier T."/>
            <person name="Pain A."/>
            <person name="Lu M."/>
            <person name="Harper D."/>
            <person name="Lindsay R."/>
            <person name="Hauser H."/>
            <person name="James K.D."/>
            <person name="Quiles M."/>
            <person name="Madan Babu M."/>
            <person name="Saito T."/>
            <person name="Buchrieser C."/>
            <person name="Wardroper A."/>
            <person name="Felder M."/>
            <person name="Thangavelu M."/>
            <person name="Johnson D."/>
            <person name="Knights A."/>
            <person name="Loulseged H."/>
            <person name="Mungall K.L."/>
            <person name="Oliver K."/>
            <person name="Price C."/>
            <person name="Quail M.A."/>
            <person name="Urushihara H."/>
            <person name="Hernandez J."/>
            <person name="Rabbinowitsch E."/>
            <person name="Steffen D."/>
            <person name="Sanders M."/>
            <person name="Ma J."/>
            <person name="Kohara Y."/>
            <person name="Sharp S."/>
            <person name="Simmonds M.N."/>
            <person name="Spiegler S."/>
            <person name="Tivey A."/>
            <person name="Sugano S."/>
            <person name="White B."/>
            <person name="Walker D."/>
            <person name="Woodward J.R."/>
            <person name="Winckler T."/>
            <person name="Tanaka Y."/>
            <person name="Shaulsky G."/>
            <person name="Schleicher M."/>
            <person name="Weinstock G.M."/>
            <person name="Rosenthal A."/>
            <person name="Cox E.C."/>
            <person name="Chisholm R.L."/>
            <person name="Gibbs R.A."/>
            <person name="Loomis W.F."/>
            <person name="Platzer M."/>
            <person name="Kay R.R."/>
            <person name="Williams J.G."/>
            <person name="Dear P.H."/>
            <person name="Noegel A.A."/>
            <person name="Barrell B.G."/>
            <person name="Kuspa A."/>
        </authorList>
    </citation>
    <scope>NUCLEOTIDE SEQUENCE [LARGE SCALE GENOMIC DNA]</scope>
    <source>
        <strain>AX4</strain>
    </source>
</reference>
<gene>
    <name type="primary">gtaU</name>
    <name type="ORF">DDB_G0280853</name>
</gene>
<dbReference type="EMBL" id="AAFI02000039">
    <property type="protein sequence ID" value="EAL66968.1"/>
    <property type="molecule type" value="Genomic_DNA"/>
</dbReference>
<dbReference type="RefSeq" id="XP_640944.1">
    <property type="nucleotide sequence ID" value="XM_635852.1"/>
</dbReference>
<dbReference type="PaxDb" id="44689-DDB0220475"/>
<dbReference type="EnsemblProtists" id="EAL66968">
    <property type="protein sequence ID" value="EAL66968"/>
    <property type="gene ID" value="DDB_G0280853"/>
</dbReference>
<dbReference type="GeneID" id="8622748"/>
<dbReference type="KEGG" id="ddi:DDB_G0280853"/>
<dbReference type="dictyBase" id="DDB_G0280853">
    <property type="gene designation" value="gtaU"/>
</dbReference>
<dbReference type="VEuPathDB" id="AmoebaDB:DDB_G0280853"/>
<dbReference type="eggNOG" id="ENOG502RHY5">
    <property type="taxonomic scope" value="Eukaryota"/>
</dbReference>
<dbReference type="HOGENOM" id="CLU_853727_0_0_1"/>
<dbReference type="InParanoid" id="Q54US7"/>
<dbReference type="PRO" id="PR:Q54US7"/>
<dbReference type="Proteomes" id="UP000002195">
    <property type="component" value="Chromosome 3"/>
</dbReference>
<dbReference type="GO" id="GO:0043565">
    <property type="term" value="F:sequence-specific DNA binding"/>
    <property type="evidence" value="ECO:0007669"/>
    <property type="project" value="InterPro"/>
</dbReference>
<dbReference type="GO" id="GO:0008270">
    <property type="term" value="F:zinc ion binding"/>
    <property type="evidence" value="ECO:0007669"/>
    <property type="project" value="UniProtKB-KW"/>
</dbReference>
<dbReference type="GO" id="GO:0006355">
    <property type="term" value="P:regulation of DNA-templated transcription"/>
    <property type="evidence" value="ECO:0007669"/>
    <property type="project" value="InterPro"/>
</dbReference>
<dbReference type="Gene3D" id="3.30.50.10">
    <property type="entry name" value="Erythroid Transcription Factor GATA-1, subunit A"/>
    <property type="match status" value="1"/>
</dbReference>
<dbReference type="InterPro" id="IPR000679">
    <property type="entry name" value="Znf_GATA"/>
</dbReference>
<dbReference type="InterPro" id="IPR013088">
    <property type="entry name" value="Znf_NHR/GATA"/>
</dbReference>
<dbReference type="SMART" id="SM00401">
    <property type="entry name" value="ZnF_GATA"/>
    <property type="match status" value="1"/>
</dbReference>
<dbReference type="SUPFAM" id="SSF57716">
    <property type="entry name" value="Glucocorticoid receptor-like (DNA-binding domain)"/>
    <property type="match status" value="1"/>
</dbReference>
<dbReference type="PROSITE" id="PS00344">
    <property type="entry name" value="GATA_ZN_FINGER_1"/>
    <property type="match status" value="1"/>
</dbReference>
<dbReference type="PROSITE" id="PS50114">
    <property type="entry name" value="GATA_ZN_FINGER_2"/>
    <property type="match status" value="1"/>
</dbReference>
<evidence type="ECO:0000255" key="1">
    <source>
        <dbReference type="PROSITE-ProRule" id="PRU00094"/>
    </source>
</evidence>
<evidence type="ECO:0000256" key="2">
    <source>
        <dbReference type="SAM" id="MobiDB-lite"/>
    </source>
</evidence>
<name>GTAU_DICDI</name>
<sequence>MFRNNQPDQNNNEDENNTNLNSNNNNRTTTTTTTTSSNINSNNNNNNNNNINNNNNNNNNNNNNNNNNNNNNNNNNNNNNNNNNNNNNNNNNNNNNNNNNNNNNRDFIIRTIMQDLRLGIRDIIHPSTLTGLLGGYINALANLDQNQSSSSSSGASGSRSGSSALNSINNNNYSPTTSSLNRVRNQYNQVVRDEEDDDYDNGAEDGFDYDGDDNEDGSDSACESKKKRGRPRKPTPERCSNCKITHSSYWRRITVNGQKLDFCNACGLHQMKRNNRIKESKQRHSIQNIMNQNQEEEEEEREEEEEEEEEEDEEFETLEEEEEDDE</sequence>
<protein>
    <recommendedName>
        <fullName>GATA zinc finger domain-containing protein 21</fullName>
    </recommendedName>
</protein>
<accession>Q54US7</accession>
<keyword id="KW-0479">Metal-binding</keyword>
<keyword id="KW-1185">Reference proteome</keyword>
<keyword id="KW-0862">Zinc</keyword>
<keyword id="KW-0863">Zinc-finger</keyword>
<feature type="chain" id="PRO_0000330454" description="GATA zinc finger domain-containing protein 21">
    <location>
        <begin position="1"/>
        <end position="326"/>
    </location>
</feature>
<feature type="zinc finger region" description="GATA-type" evidence="1">
    <location>
        <begin position="239"/>
        <end position="266"/>
    </location>
</feature>
<feature type="region of interest" description="Disordered" evidence="2">
    <location>
        <begin position="1"/>
        <end position="102"/>
    </location>
</feature>
<feature type="region of interest" description="Disordered" evidence="2">
    <location>
        <begin position="145"/>
        <end position="238"/>
    </location>
</feature>
<feature type="region of interest" description="Disordered" evidence="2">
    <location>
        <begin position="277"/>
        <end position="326"/>
    </location>
</feature>
<feature type="compositionally biased region" description="Low complexity" evidence="2">
    <location>
        <begin position="17"/>
        <end position="102"/>
    </location>
</feature>
<feature type="compositionally biased region" description="Low complexity" evidence="2">
    <location>
        <begin position="148"/>
        <end position="164"/>
    </location>
</feature>
<feature type="compositionally biased region" description="Polar residues" evidence="2">
    <location>
        <begin position="165"/>
        <end position="189"/>
    </location>
</feature>
<feature type="compositionally biased region" description="Acidic residues" evidence="2">
    <location>
        <begin position="193"/>
        <end position="218"/>
    </location>
</feature>
<feature type="compositionally biased region" description="Acidic residues" evidence="2">
    <location>
        <begin position="294"/>
        <end position="326"/>
    </location>
</feature>